<gene>
    <name type="primary">ARV1</name>
    <name type="ordered locus">AGL115W</name>
</gene>
<proteinExistence type="inferred from homology"/>
<comment type="function">
    <text evidence="1">Mediator of sterol homeostasis involved in sterol uptake, trafficking and distribution into membranes. Also regulates the sphingolipid metabolism (By similarity).</text>
</comment>
<comment type="subcellular location">
    <subcellularLocation>
        <location evidence="1">Endoplasmic reticulum membrane</location>
        <topology evidence="1">Multi-pass membrane protein</topology>
    </subcellularLocation>
    <subcellularLocation>
        <location evidence="1">Golgi apparatus membrane</location>
        <topology evidence="1">Multi-pass membrane protein</topology>
    </subcellularLocation>
</comment>
<comment type="similarity">
    <text evidence="3">Belongs to the ARV1 family.</text>
</comment>
<feature type="chain" id="PRO_0000228134" description="Protein ARV1">
    <location>
        <begin position="1"/>
        <end position="299"/>
    </location>
</feature>
<feature type="transmembrane region" description="Helical" evidence="2">
    <location>
        <begin position="99"/>
        <end position="116"/>
    </location>
</feature>
<feature type="transmembrane region" description="Helical" evidence="2">
    <location>
        <begin position="149"/>
        <end position="169"/>
    </location>
</feature>
<feature type="transmembrane region" description="Helical" evidence="2">
    <location>
        <begin position="190"/>
        <end position="210"/>
    </location>
</feature>
<feature type="transmembrane region" description="Helical" evidence="2">
    <location>
        <begin position="211"/>
        <end position="231"/>
    </location>
</feature>
<feature type="transmembrane region" description="Helical" evidence="2">
    <location>
        <begin position="245"/>
        <end position="265"/>
    </location>
</feature>
<feature type="glycosylation site" description="N-linked (GlcNAc...) asparagine" evidence="2">
    <location>
        <position position="176"/>
    </location>
</feature>
<protein>
    <recommendedName>
        <fullName>Protein ARV1</fullName>
    </recommendedName>
</protein>
<evidence type="ECO:0000250" key="1"/>
<evidence type="ECO:0000255" key="2"/>
<evidence type="ECO:0000305" key="3"/>
<name>ARV1_EREGS</name>
<accession>Q750Q7</accession>
<organism>
    <name type="scientific">Eremothecium gossypii (strain ATCC 10895 / CBS 109.51 / FGSC 9923 / NRRL Y-1056)</name>
    <name type="common">Yeast</name>
    <name type="synonym">Ashbya gossypii</name>
    <dbReference type="NCBI Taxonomy" id="284811"/>
    <lineage>
        <taxon>Eukaryota</taxon>
        <taxon>Fungi</taxon>
        <taxon>Dikarya</taxon>
        <taxon>Ascomycota</taxon>
        <taxon>Saccharomycotina</taxon>
        <taxon>Saccharomycetes</taxon>
        <taxon>Saccharomycetales</taxon>
        <taxon>Saccharomycetaceae</taxon>
        <taxon>Eremothecium</taxon>
    </lineage>
</organism>
<sequence>MICINCCCHVESLYVAYPGDHIRLTDCWQCGEVVDRYVEFDNVLLFIDLLLLKPGAYRHLVYNSLEVDMRRYPEHGTRESGFRGYVQDWLLWFRKYDRLNRIWLLLITFEVYLMWMTEEKKYNNYYREPATQYGWHLLTGDVLSLQNPLLQYLFFAVYVIGDLALLHKLTRESLLNWSQWGQDLRYAKDIVSYTILLSYGAKIFPILMLIWPYDSLVSTSIIKWIANFYIVESLRIVTSKSYSYIILLFAGIFIVRSVVLKPVLALIVSRGNMLQAQRYLWGEYELFKFRFLTKRDIFL</sequence>
<reference key="1">
    <citation type="journal article" date="2004" name="Science">
        <title>The Ashbya gossypii genome as a tool for mapping the ancient Saccharomyces cerevisiae genome.</title>
        <authorList>
            <person name="Dietrich F.S."/>
            <person name="Voegeli S."/>
            <person name="Brachat S."/>
            <person name="Lerch A."/>
            <person name="Gates K."/>
            <person name="Steiner S."/>
            <person name="Mohr C."/>
            <person name="Poehlmann R."/>
            <person name="Luedi P."/>
            <person name="Choi S."/>
            <person name="Wing R.A."/>
            <person name="Flavier A."/>
            <person name="Gaffney T.D."/>
            <person name="Philippsen P."/>
        </authorList>
    </citation>
    <scope>NUCLEOTIDE SEQUENCE [LARGE SCALE GENOMIC DNA]</scope>
    <source>
        <strain>ATCC 10895 / CBS 109.51 / FGSC 9923 / NRRL Y-1056</strain>
    </source>
</reference>
<reference key="2">
    <citation type="journal article" date="2013" name="G3 (Bethesda)">
        <title>Genomes of Ashbya fungi isolated from insects reveal four mating-type loci, numerous translocations, lack of transposons, and distinct gene duplications.</title>
        <authorList>
            <person name="Dietrich F.S."/>
            <person name="Voegeli S."/>
            <person name="Kuo S."/>
            <person name="Philippsen P."/>
        </authorList>
    </citation>
    <scope>GENOME REANNOTATION</scope>
    <source>
        <strain>ATCC 10895 / CBS 109.51 / FGSC 9923 / NRRL Y-1056</strain>
    </source>
</reference>
<dbReference type="EMBL" id="AE016820">
    <property type="protein sequence ID" value="AAS54376.1"/>
    <property type="molecule type" value="Genomic_DNA"/>
</dbReference>
<dbReference type="RefSeq" id="NP_986552.1">
    <property type="nucleotide sequence ID" value="NM_211614.1"/>
</dbReference>
<dbReference type="FunCoup" id="Q750Q7">
    <property type="interactions" value="42"/>
</dbReference>
<dbReference type="STRING" id="284811.Q750Q7"/>
<dbReference type="GlyCosmos" id="Q750Q7">
    <property type="glycosylation" value="1 site, No reported glycans"/>
</dbReference>
<dbReference type="EnsemblFungi" id="AAS54376">
    <property type="protein sequence ID" value="AAS54376"/>
    <property type="gene ID" value="AGOS_AGL115W"/>
</dbReference>
<dbReference type="GeneID" id="4622851"/>
<dbReference type="KEGG" id="ago:AGOS_AGL115W"/>
<dbReference type="eggNOG" id="KOG3134">
    <property type="taxonomic scope" value="Eukaryota"/>
</dbReference>
<dbReference type="HOGENOM" id="CLU_057366_2_0_1"/>
<dbReference type="InParanoid" id="Q750Q7"/>
<dbReference type="OMA" id="MLDMNVK"/>
<dbReference type="OrthoDB" id="2192830at2759"/>
<dbReference type="Proteomes" id="UP000000591">
    <property type="component" value="Chromosome VII"/>
</dbReference>
<dbReference type="GO" id="GO:0032541">
    <property type="term" value="C:cortical endoplasmic reticulum"/>
    <property type="evidence" value="ECO:0000318"/>
    <property type="project" value="GO_Central"/>
</dbReference>
<dbReference type="GO" id="GO:0005789">
    <property type="term" value="C:endoplasmic reticulum membrane"/>
    <property type="evidence" value="ECO:0007669"/>
    <property type="project" value="UniProtKB-SubCell"/>
</dbReference>
<dbReference type="GO" id="GO:0005794">
    <property type="term" value="C:Golgi apparatus"/>
    <property type="evidence" value="ECO:0000318"/>
    <property type="project" value="GO_Central"/>
</dbReference>
<dbReference type="GO" id="GO:0000139">
    <property type="term" value="C:Golgi membrane"/>
    <property type="evidence" value="ECO:0007669"/>
    <property type="project" value="UniProtKB-SubCell"/>
</dbReference>
<dbReference type="GO" id="GO:0032366">
    <property type="term" value="P:intracellular sterol transport"/>
    <property type="evidence" value="ECO:0000318"/>
    <property type="project" value="GO_Central"/>
</dbReference>
<dbReference type="GO" id="GO:0097036">
    <property type="term" value="P:regulation of plasma membrane sterol distribution"/>
    <property type="evidence" value="ECO:0000318"/>
    <property type="project" value="GO_Central"/>
</dbReference>
<dbReference type="GO" id="GO:0006665">
    <property type="term" value="P:sphingolipid metabolic process"/>
    <property type="evidence" value="ECO:0000318"/>
    <property type="project" value="GO_Central"/>
</dbReference>
<dbReference type="GO" id="GO:0016125">
    <property type="term" value="P:sterol metabolic process"/>
    <property type="evidence" value="ECO:0000318"/>
    <property type="project" value="GO_Central"/>
</dbReference>
<dbReference type="InterPro" id="IPR007290">
    <property type="entry name" value="Arv1"/>
</dbReference>
<dbReference type="PANTHER" id="PTHR14467">
    <property type="entry name" value="ARV1"/>
    <property type="match status" value="1"/>
</dbReference>
<dbReference type="PANTHER" id="PTHR14467:SF0">
    <property type="entry name" value="PROTEIN ARV1"/>
    <property type="match status" value="1"/>
</dbReference>
<dbReference type="Pfam" id="PF04161">
    <property type="entry name" value="Arv1"/>
    <property type="match status" value="1"/>
</dbReference>
<keyword id="KW-0256">Endoplasmic reticulum</keyword>
<keyword id="KW-0325">Glycoprotein</keyword>
<keyword id="KW-0333">Golgi apparatus</keyword>
<keyword id="KW-0443">Lipid metabolism</keyword>
<keyword id="KW-0445">Lipid transport</keyword>
<keyword id="KW-0472">Membrane</keyword>
<keyword id="KW-1185">Reference proteome</keyword>
<keyword id="KW-0746">Sphingolipid metabolism</keyword>
<keyword id="KW-0812">Transmembrane</keyword>
<keyword id="KW-1133">Transmembrane helix</keyword>
<keyword id="KW-0813">Transport</keyword>